<comment type="function">
    <text evidence="1">Usually encoded in the trnK tRNA gene intron. Probably assists in splicing its own and other chloroplast group II introns.</text>
</comment>
<comment type="subcellular location">
    <subcellularLocation>
        <location>Plastid</location>
        <location>Chloroplast</location>
    </subcellularLocation>
</comment>
<comment type="similarity">
    <text evidence="1">Belongs to the intron maturase 2 family. MatK subfamily.</text>
</comment>
<proteinExistence type="inferred from homology"/>
<evidence type="ECO:0000255" key="1">
    <source>
        <dbReference type="HAMAP-Rule" id="MF_01390"/>
    </source>
</evidence>
<dbReference type="EMBL" id="AB080936">
    <property type="protein sequence ID" value="BAC11939.1"/>
    <property type="molecule type" value="Genomic_DNA"/>
</dbReference>
<dbReference type="RefSeq" id="YP_010449215.1">
    <property type="nucleotide sequence ID" value="NC_065458.1"/>
</dbReference>
<dbReference type="GeneID" id="74190375"/>
<dbReference type="GO" id="GO:0009507">
    <property type="term" value="C:chloroplast"/>
    <property type="evidence" value="ECO:0007669"/>
    <property type="project" value="UniProtKB-SubCell"/>
</dbReference>
<dbReference type="GO" id="GO:0003723">
    <property type="term" value="F:RNA binding"/>
    <property type="evidence" value="ECO:0007669"/>
    <property type="project" value="UniProtKB-KW"/>
</dbReference>
<dbReference type="GO" id="GO:0006397">
    <property type="term" value="P:mRNA processing"/>
    <property type="evidence" value="ECO:0007669"/>
    <property type="project" value="UniProtKB-KW"/>
</dbReference>
<dbReference type="GO" id="GO:0008380">
    <property type="term" value="P:RNA splicing"/>
    <property type="evidence" value="ECO:0007669"/>
    <property type="project" value="UniProtKB-UniRule"/>
</dbReference>
<dbReference type="GO" id="GO:0008033">
    <property type="term" value="P:tRNA processing"/>
    <property type="evidence" value="ECO:0007669"/>
    <property type="project" value="UniProtKB-KW"/>
</dbReference>
<dbReference type="HAMAP" id="MF_01390">
    <property type="entry name" value="MatK"/>
    <property type="match status" value="1"/>
</dbReference>
<dbReference type="InterPro" id="IPR024937">
    <property type="entry name" value="Domain_X"/>
</dbReference>
<dbReference type="InterPro" id="IPR002866">
    <property type="entry name" value="Maturase_MatK"/>
</dbReference>
<dbReference type="InterPro" id="IPR024942">
    <property type="entry name" value="Maturase_MatK_N"/>
</dbReference>
<dbReference type="PANTHER" id="PTHR34811">
    <property type="entry name" value="MATURASE K"/>
    <property type="match status" value="1"/>
</dbReference>
<dbReference type="PANTHER" id="PTHR34811:SF1">
    <property type="entry name" value="MATURASE K"/>
    <property type="match status" value="1"/>
</dbReference>
<dbReference type="Pfam" id="PF01348">
    <property type="entry name" value="Intron_maturas2"/>
    <property type="match status" value="1"/>
</dbReference>
<dbReference type="Pfam" id="PF01824">
    <property type="entry name" value="MatK_N"/>
    <property type="match status" value="1"/>
</dbReference>
<gene>
    <name evidence="1" type="primary">matK</name>
</gene>
<name>MATK_PINEC</name>
<sequence length="515" mass="61033">MDEFHRCGKEDSFWQQCFLYPLFFQEDLYAISHDHYLDVSSSSRPMEHLSSNDQLSFLTVKRLIGQIRQQNHSIVLFVNCDPNPLADRKKSFYSESVLEALTLVLEVPFSIWSKYSVEGMNESKSFRSIHSIFPFLEDKFPHSNSILDARIPYSIHPEILVRTFRRWIRDAPSLHPLRSVLYEYRNSPDNLQRSIIVVPRVNTRFFLFLWNYYVCECESILFSRLKRSSHSRSLSHGSFPQRTHFHRKIKHIIIFSRRNSLKSIWSLKDPKIHYVRYGERPIIAIKGAHLLVKKCRYYLLIFRQFYFHLWSEPYRVCSHQLSKNCSSSPGYFLRVRMNPILVRTKMLDELFIADLITDEIDPIVPIVPIIGLLATEKFCDISGRPISKLSWTSLTDDDILDRFDQIWRNLFHYYSGSFDRDGLYRIKYILSLSCAKTLACKHKSTIRVVRKELGPELFKKSFSKEREFYSLRFSSKAAARSQRERIWHSDIPQINPLANSWQKIQDLKIENLFDQ</sequence>
<feature type="chain" id="PRO_0000143611" description="Maturase K">
    <location>
        <begin position="1"/>
        <end position="515"/>
    </location>
</feature>
<geneLocation type="chloroplast"/>
<protein>
    <recommendedName>
        <fullName evidence="1">Maturase K</fullName>
    </recommendedName>
    <alternativeName>
        <fullName evidence="1">Intron maturase</fullName>
    </alternativeName>
</protein>
<organism>
    <name type="scientific">Pinus echinata</name>
    <name type="common">Shortleaf pine</name>
    <dbReference type="NCBI Taxonomy" id="71631"/>
    <lineage>
        <taxon>Eukaryota</taxon>
        <taxon>Viridiplantae</taxon>
        <taxon>Streptophyta</taxon>
        <taxon>Embryophyta</taxon>
        <taxon>Tracheophyta</taxon>
        <taxon>Spermatophyta</taxon>
        <taxon>Pinopsida</taxon>
        <taxon>Pinidae</taxon>
        <taxon>Conifers I</taxon>
        <taxon>Pinales</taxon>
        <taxon>Pinaceae</taxon>
        <taxon>Pinus</taxon>
        <taxon>Pinus subgen. Pinus</taxon>
    </lineage>
</organism>
<accession>Q8HQS8</accession>
<reference key="1">
    <citation type="submission" date="2002-03" db="EMBL/GenBank/DDBJ databases">
        <title>Phylogeny of diploxylon Pinus.</title>
        <authorList>
            <person name="Geada-Lopez G."/>
            <person name="Kamiya K."/>
            <person name="Harada K."/>
        </authorList>
    </citation>
    <scope>NUCLEOTIDE SEQUENCE [GENOMIC DNA]</scope>
    <source>
        <tissue>Leaf</tissue>
    </source>
</reference>
<keyword id="KW-0150">Chloroplast</keyword>
<keyword id="KW-0507">mRNA processing</keyword>
<keyword id="KW-0934">Plastid</keyword>
<keyword id="KW-0694">RNA-binding</keyword>
<keyword id="KW-0819">tRNA processing</keyword>